<keyword id="KW-0997">Cell inner membrane</keyword>
<keyword id="KW-1003">Cell membrane</keyword>
<keyword id="KW-0472">Membrane</keyword>
<keyword id="KW-1185">Reference proteome</keyword>
<keyword id="KW-0812">Transmembrane</keyword>
<keyword id="KW-1133">Transmembrane helix</keyword>
<keyword id="KW-0813">Transport</keyword>
<name>GSID_ECOK1</name>
<comment type="function">
    <text evidence="1">Part of the ABC transporter complex GsiABCD involved in glutathione import. Probably responsible for the translocation of the substrate across the membrane.</text>
</comment>
<comment type="subunit">
    <text evidence="1">The complex is composed of two ATP-binding proteins (GsiA), two transmembrane proteins (GsiC and GsiD) and a solute-binding protein (GsiB).</text>
</comment>
<comment type="subcellular location">
    <subcellularLocation>
        <location evidence="1">Cell inner membrane</location>
        <topology evidence="2">Multi-pass membrane protein</topology>
    </subcellularLocation>
</comment>
<comment type="similarity">
    <text evidence="4">Belongs to the binding-protein-dependent transport system permease family.</text>
</comment>
<sequence>MRLFNWRRQAVLNAMPLVKPDQVRTPWHEFWRRFRRQHMAMTAALFVILLIVVAIFARWIAPYDAENYFDYDNLNNGPSLQHWFGVDSLGRDIFSRVLVGAQISLAAGVFAVFIGAAIGTLLGLLAGYYEGWWDRLSMRICDVLFAFPGILLAIAVVAVLGSGIANVIIAVAIFSIPAFARLVRGNTLVLKQQTFIESARSIGASDMTILLRHILPGTVSSIVVFFTMRIGTSIISAASLSFLGLGAQPPTPEWGAMLNEARADMVIAPHVAVFPALAIFLTVLAFNLLGDGLRDALDPKIKG</sequence>
<organism>
    <name type="scientific">Escherichia coli O1:K1 / APEC</name>
    <dbReference type="NCBI Taxonomy" id="405955"/>
    <lineage>
        <taxon>Bacteria</taxon>
        <taxon>Pseudomonadati</taxon>
        <taxon>Pseudomonadota</taxon>
        <taxon>Gammaproteobacteria</taxon>
        <taxon>Enterobacterales</taxon>
        <taxon>Enterobacteriaceae</taxon>
        <taxon>Escherichia</taxon>
    </lineage>
</organism>
<evidence type="ECO:0000250" key="1">
    <source>
        <dbReference type="UniProtKB" id="P75799"/>
    </source>
</evidence>
<evidence type="ECO:0000255" key="2"/>
<evidence type="ECO:0000255" key="3">
    <source>
        <dbReference type="PROSITE-ProRule" id="PRU00441"/>
    </source>
</evidence>
<evidence type="ECO:0000305" key="4"/>
<reference key="1">
    <citation type="journal article" date="2007" name="J. Bacteriol.">
        <title>The genome sequence of avian pathogenic Escherichia coli strain O1:K1:H7 shares strong similarities with human extraintestinal pathogenic E. coli genomes.</title>
        <authorList>
            <person name="Johnson T.J."/>
            <person name="Kariyawasam S."/>
            <person name="Wannemuehler Y."/>
            <person name="Mangiamele P."/>
            <person name="Johnson S.J."/>
            <person name="Doetkott C."/>
            <person name="Skyberg J.A."/>
            <person name="Lynne A.M."/>
            <person name="Johnson J.R."/>
            <person name="Nolan L.K."/>
        </authorList>
    </citation>
    <scope>NUCLEOTIDE SEQUENCE [LARGE SCALE GENOMIC DNA]</scope>
</reference>
<proteinExistence type="inferred from homology"/>
<protein>
    <recommendedName>
        <fullName evidence="1">Glutathione transport system permease protein GsiD</fullName>
    </recommendedName>
</protein>
<gene>
    <name evidence="1" type="primary">gsiD</name>
    <name type="ordered locus">Ecok1_07170</name>
    <name type="ORF">APECO1_1261</name>
</gene>
<feature type="chain" id="PRO_0000280003" description="Glutathione transport system permease protein GsiD">
    <location>
        <begin position="1"/>
        <end position="303"/>
    </location>
</feature>
<feature type="transmembrane region" description="Helical" evidence="3">
    <location>
        <begin position="40"/>
        <end position="60"/>
    </location>
</feature>
<feature type="transmembrane region" description="Helical" evidence="3">
    <location>
        <begin position="105"/>
        <end position="125"/>
    </location>
</feature>
<feature type="transmembrane region" description="Helical" evidence="3">
    <location>
        <begin position="144"/>
        <end position="164"/>
    </location>
</feature>
<feature type="transmembrane region" description="Helical" evidence="3">
    <location>
        <begin position="165"/>
        <end position="185"/>
    </location>
</feature>
<feature type="transmembrane region" description="Helical" evidence="3">
    <location>
        <begin position="222"/>
        <end position="242"/>
    </location>
</feature>
<feature type="transmembrane region" description="Helical" evidence="3">
    <location>
        <begin position="266"/>
        <end position="286"/>
    </location>
</feature>
<feature type="domain" description="ABC transmembrane type-1" evidence="3">
    <location>
        <begin position="101"/>
        <end position="290"/>
    </location>
</feature>
<accession>A1A971</accession>
<dbReference type="EMBL" id="CP000468">
    <property type="protein sequence ID" value="ABJ00211.1"/>
    <property type="molecule type" value="Genomic_DNA"/>
</dbReference>
<dbReference type="RefSeq" id="WP_001236052.1">
    <property type="nucleotide sequence ID" value="NZ_CADILS010000017.1"/>
</dbReference>
<dbReference type="SMR" id="A1A971"/>
<dbReference type="KEGG" id="ecv:APECO1_1261"/>
<dbReference type="HOGENOM" id="CLU_028518_1_1_6"/>
<dbReference type="Proteomes" id="UP000008216">
    <property type="component" value="Chromosome"/>
</dbReference>
<dbReference type="GO" id="GO:0005886">
    <property type="term" value="C:plasma membrane"/>
    <property type="evidence" value="ECO:0007669"/>
    <property type="project" value="UniProtKB-SubCell"/>
</dbReference>
<dbReference type="GO" id="GO:0071916">
    <property type="term" value="F:dipeptide transmembrane transporter activity"/>
    <property type="evidence" value="ECO:0007669"/>
    <property type="project" value="TreeGrafter"/>
</dbReference>
<dbReference type="CDD" id="cd06261">
    <property type="entry name" value="TM_PBP2"/>
    <property type="match status" value="1"/>
</dbReference>
<dbReference type="FunFam" id="1.10.3720.10:FF:000022">
    <property type="entry name" value="Glutathione ABC transporter permease GsiD"/>
    <property type="match status" value="1"/>
</dbReference>
<dbReference type="Gene3D" id="1.10.3720.10">
    <property type="entry name" value="MetI-like"/>
    <property type="match status" value="1"/>
</dbReference>
<dbReference type="InterPro" id="IPR050366">
    <property type="entry name" value="BP-dependent_transpt_permease"/>
</dbReference>
<dbReference type="InterPro" id="IPR000515">
    <property type="entry name" value="MetI-like"/>
</dbReference>
<dbReference type="InterPro" id="IPR035906">
    <property type="entry name" value="MetI-like_sf"/>
</dbReference>
<dbReference type="InterPro" id="IPR025966">
    <property type="entry name" value="OppC_N"/>
</dbReference>
<dbReference type="NCBIfam" id="NF011662">
    <property type="entry name" value="PRK15082.1"/>
    <property type="match status" value="1"/>
</dbReference>
<dbReference type="PANTHER" id="PTHR43386:SF3">
    <property type="entry name" value="GLUTATHIONE TRANSPORT SYSTEM PERMEASE PROTEIN GSID"/>
    <property type="match status" value="1"/>
</dbReference>
<dbReference type="PANTHER" id="PTHR43386">
    <property type="entry name" value="OLIGOPEPTIDE TRANSPORT SYSTEM PERMEASE PROTEIN APPC"/>
    <property type="match status" value="1"/>
</dbReference>
<dbReference type="Pfam" id="PF00528">
    <property type="entry name" value="BPD_transp_1"/>
    <property type="match status" value="1"/>
</dbReference>
<dbReference type="Pfam" id="PF12911">
    <property type="entry name" value="OppC_N"/>
    <property type="match status" value="1"/>
</dbReference>
<dbReference type="SUPFAM" id="SSF161098">
    <property type="entry name" value="MetI-like"/>
    <property type="match status" value="1"/>
</dbReference>
<dbReference type="PROSITE" id="PS50928">
    <property type="entry name" value="ABC_TM1"/>
    <property type="match status" value="1"/>
</dbReference>